<organism>
    <name type="scientific">Homo sapiens</name>
    <name type="common">Human</name>
    <dbReference type="NCBI Taxonomy" id="9606"/>
    <lineage>
        <taxon>Eukaryota</taxon>
        <taxon>Metazoa</taxon>
        <taxon>Chordata</taxon>
        <taxon>Craniata</taxon>
        <taxon>Vertebrata</taxon>
        <taxon>Euteleostomi</taxon>
        <taxon>Mammalia</taxon>
        <taxon>Eutheria</taxon>
        <taxon>Euarchontoglires</taxon>
        <taxon>Primates</taxon>
        <taxon>Haplorrhini</taxon>
        <taxon>Catarrhini</taxon>
        <taxon>Hominidae</taxon>
        <taxon>Homo</taxon>
    </lineage>
</organism>
<evidence type="ECO:0000255" key="1"/>
<evidence type="ECO:0000255" key="2">
    <source>
        <dbReference type="PROSITE-ProRule" id="PRU00286"/>
    </source>
</evidence>
<evidence type="ECO:0000255" key="3">
    <source>
        <dbReference type="PROSITE-ProRule" id="PRU00691"/>
    </source>
</evidence>
<evidence type="ECO:0000256" key="4">
    <source>
        <dbReference type="SAM" id="MobiDB-lite"/>
    </source>
</evidence>
<evidence type="ECO:0000269" key="5">
    <source>
    </source>
</evidence>
<evidence type="ECO:0000303" key="6">
    <source>
    </source>
</evidence>
<evidence type="ECO:0000303" key="7">
    <source>
    </source>
</evidence>
<evidence type="ECO:0000305" key="8"/>
<feature type="signal peptide" evidence="1">
    <location>
        <begin position="1"/>
        <end position="25"/>
    </location>
</feature>
<feature type="chain" id="PRO_0000236683" description="DnaJ homolog subfamily C member 16">
    <location>
        <begin position="26"/>
        <end position="782"/>
    </location>
</feature>
<feature type="topological domain" description="Cytoplasmic" evidence="1">
    <location>
        <begin position="26"/>
        <end position="535"/>
    </location>
</feature>
<feature type="transmembrane region" description="Helical; Anchor for type IV membrane protein" evidence="1">
    <location>
        <begin position="536"/>
        <end position="556"/>
    </location>
</feature>
<feature type="topological domain" description="Extracellular" evidence="1">
    <location>
        <begin position="557"/>
        <end position="782"/>
    </location>
</feature>
<feature type="domain" description="J" evidence="2">
    <location>
        <begin position="29"/>
        <end position="93"/>
    </location>
</feature>
<feature type="domain" description="Thioredoxin" evidence="3">
    <location>
        <begin position="119"/>
        <end position="247"/>
    </location>
</feature>
<feature type="region of interest" description="Disordered" evidence="4">
    <location>
        <begin position="562"/>
        <end position="593"/>
    </location>
</feature>
<feature type="compositionally biased region" description="Basic and acidic residues" evidence="4">
    <location>
        <begin position="563"/>
        <end position="582"/>
    </location>
</feature>
<feature type="compositionally biased region" description="Polar residues" evidence="4">
    <location>
        <begin position="583"/>
        <end position="593"/>
    </location>
</feature>
<feature type="glycosylation site" description="N-linked (GlcNAc...) asparagine" evidence="1">
    <location>
        <position position="631"/>
    </location>
</feature>
<feature type="splice variant" id="VSP_018583" description="In isoform 2." evidence="6">
    <location>
        <begin position="1"/>
        <end position="312"/>
    </location>
</feature>
<feature type="mutagenesis site" description="Does not lead to enlargement of autophagosomes when overexpressed." evidence="5">
    <original>H</original>
    <variation>Q</variation>
    <location>
        <position position="57"/>
    </location>
</feature>
<feature type="mutagenesis site" description="Does not lead to enlargement of autophagosomes when overexpressed; when associated with A-174." evidence="5">
    <original>C</original>
    <variation>A</variation>
    <location>
        <position position="171"/>
    </location>
</feature>
<feature type="mutagenesis site" description="Does not lead to enlargement of autophagosomes when overexpressed; when associated with A-171." evidence="5">
    <original>C</original>
    <variation>A</variation>
    <location>
        <position position="174"/>
    </location>
</feature>
<comment type="function">
    <text evidence="5">Plays an important role in regulating the size of autophagosomes during the formation process.</text>
</comment>
<comment type="subcellular location">
    <subcellularLocation>
        <location evidence="5">Endoplasmic reticulum membrane</location>
        <topology evidence="8">Single-pass type IV membrane protein</topology>
    </subcellularLocation>
</comment>
<comment type="alternative products">
    <event type="alternative splicing"/>
    <isoform>
        <id>Q9Y2G8-1</id>
        <name>1</name>
        <sequence type="displayed"/>
    </isoform>
    <isoform>
        <id>Q9Y2G8-2</id>
        <name>2</name>
        <sequence type="described" ref="VSP_018583"/>
    </isoform>
</comment>
<comment type="sequence caution" evidence="8">
    <conflict type="erroneous initiation">
        <sequence resource="EMBL-CDS" id="BAA76806"/>
    </conflict>
    <text>Extended N-terminus.</text>
</comment>
<dbReference type="EMBL" id="AB023179">
    <property type="protein sequence ID" value="BAA76806.2"/>
    <property type="status" value="ALT_INIT"/>
    <property type="molecule type" value="mRNA"/>
</dbReference>
<dbReference type="EMBL" id="CR749259">
    <property type="protein sequence ID" value="CAH18115.1"/>
    <property type="molecule type" value="mRNA"/>
</dbReference>
<dbReference type="EMBL" id="CR749567">
    <property type="protein sequence ID" value="CAH18363.1"/>
    <property type="molecule type" value="mRNA"/>
</dbReference>
<dbReference type="EMBL" id="AL512883">
    <property type="status" value="NOT_ANNOTATED_CDS"/>
    <property type="molecule type" value="Genomic_DNA"/>
</dbReference>
<dbReference type="EMBL" id="AL121992">
    <property type="status" value="NOT_ANNOTATED_CDS"/>
    <property type="molecule type" value="Genomic_DNA"/>
</dbReference>
<dbReference type="EMBL" id="BC031991">
    <property type="protein sequence ID" value="AAH31991.1"/>
    <property type="molecule type" value="mRNA"/>
</dbReference>
<dbReference type="EMBL" id="BC047363">
    <property type="protein sequence ID" value="AAH47363.1"/>
    <property type="molecule type" value="mRNA"/>
</dbReference>
<dbReference type="CCDS" id="CCDS30606.1">
    <molecule id="Q9Y2G8-1"/>
</dbReference>
<dbReference type="CCDS" id="CCDS72710.1">
    <molecule id="Q9Y2G8-2"/>
</dbReference>
<dbReference type="RefSeq" id="NP_001274740.1">
    <molecule id="Q9Y2G8-2"/>
    <property type="nucleotide sequence ID" value="NM_001287811.2"/>
</dbReference>
<dbReference type="RefSeq" id="NP_056106.1">
    <molecule id="Q9Y2G8-1"/>
    <property type="nucleotide sequence ID" value="NM_015291.4"/>
</dbReference>
<dbReference type="SMR" id="Q9Y2G8"/>
<dbReference type="BioGRID" id="116926">
    <property type="interactions" value="265"/>
</dbReference>
<dbReference type="FunCoup" id="Q9Y2G8">
    <property type="interactions" value="1374"/>
</dbReference>
<dbReference type="IntAct" id="Q9Y2G8">
    <property type="interactions" value="81"/>
</dbReference>
<dbReference type="MINT" id="Q9Y2G8"/>
<dbReference type="STRING" id="9606.ENSP00000365007"/>
<dbReference type="GlyCosmos" id="Q9Y2G8">
    <property type="glycosylation" value="1 site, No reported glycans"/>
</dbReference>
<dbReference type="GlyGen" id="Q9Y2G8">
    <property type="glycosylation" value="1 site"/>
</dbReference>
<dbReference type="iPTMnet" id="Q9Y2G8"/>
<dbReference type="PhosphoSitePlus" id="Q9Y2G8"/>
<dbReference type="SwissPalm" id="Q9Y2G8"/>
<dbReference type="BioMuta" id="DNAJC16"/>
<dbReference type="DMDM" id="108936027"/>
<dbReference type="jPOST" id="Q9Y2G8"/>
<dbReference type="MassIVE" id="Q9Y2G8"/>
<dbReference type="PaxDb" id="9606-ENSP00000365007"/>
<dbReference type="PeptideAtlas" id="Q9Y2G8"/>
<dbReference type="ProteomicsDB" id="85773">
    <molecule id="Q9Y2G8-1"/>
</dbReference>
<dbReference type="ProteomicsDB" id="85774">
    <molecule id="Q9Y2G8-2"/>
</dbReference>
<dbReference type="Pumba" id="Q9Y2G8"/>
<dbReference type="Antibodypedia" id="46653">
    <property type="antibodies" value="28 antibodies from 14 providers"/>
</dbReference>
<dbReference type="DNASU" id="23341"/>
<dbReference type="Ensembl" id="ENST00000375847.8">
    <molecule id="Q9Y2G8-1"/>
    <property type="protein sequence ID" value="ENSP00000365007.3"/>
    <property type="gene ID" value="ENSG00000116138.13"/>
</dbReference>
<dbReference type="Ensembl" id="ENST00000616884.4">
    <molecule id="Q9Y2G8-2"/>
    <property type="protein sequence ID" value="ENSP00000480224.1"/>
    <property type="gene ID" value="ENSG00000116138.13"/>
</dbReference>
<dbReference type="GeneID" id="23341"/>
<dbReference type="KEGG" id="hsa:23341"/>
<dbReference type="MANE-Select" id="ENST00000375847.8">
    <property type="protein sequence ID" value="ENSP00000365007.3"/>
    <property type="RefSeq nucleotide sequence ID" value="NM_015291.4"/>
    <property type="RefSeq protein sequence ID" value="NP_056106.1"/>
</dbReference>
<dbReference type="UCSC" id="uc001aws.4">
    <molecule id="Q9Y2G8-1"/>
    <property type="organism name" value="human"/>
</dbReference>
<dbReference type="AGR" id="HGNC:29157"/>
<dbReference type="CTD" id="23341"/>
<dbReference type="DisGeNET" id="23341"/>
<dbReference type="GeneCards" id="DNAJC16"/>
<dbReference type="HGNC" id="HGNC:29157">
    <property type="gene designation" value="DNAJC16"/>
</dbReference>
<dbReference type="HPA" id="ENSG00000116138">
    <property type="expression patterns" value="Low tissue specificity"/>
</dbReference>
<dbReference type="MIM" id="619973">
    <property type="type" value="gene"/>
</dbReference>
<dbReference type="neXtProt" id="NX_Q9Y2G8"/>
<dbReference type="OpenTargets" id="ENSG00000116138"/>
<dbReference type="PharmGKB" id="PA142671964"/>
<dbReference type="VEuPathDB" id="HostDB:ENSG00000116138"/>
<dbReference type="eggNOG" id="KOG0715">
    <property type="taxonomic scope" value="Eukaryota"/>
</dbReference>
<dbReference type="GeneTree" id="ENSGT00940000155851"/>
<dbReference type="HOGENOM" id="CLU_020140_0_1_1"/>
<dbReference type="InParanoid" id="Q9Y2G8"/>
<dbReference type="OMA" id="QPEFAST"/>
<dbReference type="OrthoDB" id="10065037at2759"/>
<dbReference type="PAN-GO" id="Q9Y2G8">
    <property type="GO annotations" value="0 GO annotations based on evolutionary models"/>
</dbReference>
<dbReference type="PhylomeDB" id="Q9Y2G8"/>
<dbReference type="TreeFam" id="TF312804"/>
<dbReference type="PathwayCommons" id="Q9Y2G8"/>
<dbReference type="SignaLink" id="Q9Y2G8"/>
<dbReference type="BioGRID-ORCS" id="23341">
    <property type="hits" value="19 hits in 1157 CRISPR screens"/>
</dbReference>
<dbReference type="ChiTaRS" id="DNAJC16">
    <property type="organism name" value="human"/>
</dbReference>
<dbReference type="GenomeRNAi" id="23341"/>
<dbReference type="Pharos" id="Q9Y2G8">
    <property type="development level" value="Tdark"/>
</dbReference>
<dbReference type="PRO" id="PR:Q9Y2G8"/>
<dbReference type="Proteomes" id="UP000005640">
    <property type="component" value="Chromosome 1"/>
</dbReference>
<dbReference type="RNAct" id="Q9Y2G8">
    <property type="molecule type" value="protein"/>
</dbReference>
<dbReference type="Bgee" id="ENSG00000116138">
    <property type="expression patterns" value="Expressed in right lobe of liver and 205 other cell types or tissues"/>
</dbReference>
<dbReference type="ExpressionAtlas" id="Q9Y2G8">
    <property type="expression patterns" value="baseline and differential"/>
</dbReference>
<dbReference type="GO" id="GO:0005789">
    <property type="term" value="C:endoplasmic reticulum membrane"/>
    <property type="evidence" value="ECO:0000314"/>
    <property type="project" value="UniProtKB"/>
</dbReference>
<dbReference type="GO" id="GO:0016243">
    <property type="term" value="P:regulation of autophagosome size"/>
    <property type="evidence" value="ECO:0000315"/>
    <property type="project" value="UniProtKB"/>
</dbReference>
<dbReference type="CDD" id="cd06257">
    <property type="entry name" value="DnaJ"/>
    <property type="match status" value="1"/>
</dbReference>
<dbReference type="CDD" id="cd02963">
    <property type="entry name" value="TRX_DnaJ"/>
    <property type="match status" value="1"/>
</dbReference>
<dbReference type="Gene3D" id="1.10.287.110">
    <property type="entry name" value="DnaJ domain"/>
    <property type="match status" value="1"/>
</dbReference>
<dbReference type="Gene3D" id="3.40.30.10">
    <property type="entry name" value="Glutaredoxin"/>
    <property type="match status" value="1"/>
</dbReference>
<dbReference type="InterPro" id="IPR052448">
    <property type="entry name" value="DnaJ_C16_autophagy_reg"/>
</dbReference>
<dbReference type="InterPro" id="IPR001623">
    <property type="entry name" value="DnaJ_domain"/>
</dbReference>
<dbReference type="InterPro" id="IPR018253">
    <property type="entry name" value="DnaJ_domain_CS"/>
</dbReference>
<dbReference type="InterPro" id="IPR043361">
    <property type="entry name" value="DNAJC16_TRX"/>
</dbReference>
<dbReference type="InterPro" id="IPR036869">
    <property type="entry name" value="J_dom_sf"/>
</dbReference>
<dbReference type="InterPro" id="IPR036249">
    <property type="entry name" value="Thioredoxin-like_sf"/>
</dbReference>
<dbReference type="InterPro" id="IPR013766">
    <property type="entry name" value="Thioredoxin_domain"/>
</dbReference>
<dbReference type="PANTHER" id="PTHR44303">
    <property type="entry name" value="DNAJ HOMOLOG SUBFAMILY C MEMBER 16"/>
    <property type="match status" value="1"/>
</dbReference>
<dbReference type="PANTHER" id="PTHR44303:SF2">
    <property type="entry name" value="DNAJ HOMOLOG SUBFAMILY C MEMBER 16"/>
    <property type="match status" value="1"/>
</dbReference>
<dbReference type="Pfam" id="PF00226">
    <property type="entry name" value="DnaJ"/>
    <property type="match status" value="1"/>
</dbReference>
<dbReference type="Pfam" id="PF00085">
    <property type="entry name" value="Thioredoxin"/>
    <property type="match status" value="1"/>
</dbReference>
<dbReference type="PRINTS" id="PR00625">
    <property type="entry name" value="JDOMAIN"/>
</dbReference>
<dbReference type="SMART" id="SM00271">
    <property type="entry name" value="DnaJ"/>
    <property type="match status" value="1"/>
</dbReference>
<dbReference type="SUPFAM" id="SSF46565">
    <property type="entry name" value="Chaperone J-domain"/>
    <property type="match status" value="1"/>
</dbReference>
<dbReference type="SUPFAM" id="SSF52833">
    <property type="entry name" value="Thioredoxin-like"/>
    <property type="match status" value="1"/>
</dbReference>
<dbReference type="PROSITE" id="PS00636">
    <property type="entry name" value="DNAJ_1"/>
    <property type="match status" value="1"/>
</dbReference>
<dbReference type="PROSITE" id="PS50076">
    <property type="entry name" value="DNAJ_2"/>
    <property type="match status" value="1"/>
</dbReference>
<dbReference type="PROSITE" id="PS51352">
    <property type="entry name" value="THIOREDOXIN_2"/>
    <property type="match status" value="1"/>
</dbReference>
<accession>Q9Y2G8</accession>
<accession>Q68D57</accession>
<accession>Q86X32</accession>
<accession>Q8N5P4</accession>
<proteinExistence type="evidence at protein level"/>
<reference key="1">
    <citation type="journal article" date="1999" name="DNA Res.">
        <title>Prediction of the coding sequences of unidentified human genes. XIII. The complete sequences of 100 new cDNA clones from brain which code for large proteins in vitro.</title>
        <authorList>
            <person name="Nagase T."/>
            <person name="Ishikawa K."/>
            <person name="Suyama M."/>
            <person name="Kikuno R."/>
            <person name="Hirosawa M."/>
            <person name="Miyajima N."/>
            <person name="Tanaka A."/>
            <person name="Kotani H."/>
            <person name="Nomura N."/>
            <person name="Ohara O."/>
        </authorList>
    </citation>
    <scope>NUCLEOTIDE SEQUENCE [LARGE SCALE MRNA] (ISOFORM 1)</scope>
    <source>
        <tissue>Brain</tissue>
    </source>
</reference>
<reference key="2">
    <citation type="journal article" date="2002" name="DNA Res.">
        <title>Construction of expression-ready cDNA clones for KIAA genes: manual curation of 330 KIAA cDNA clones.</title>
        <authorList>
            <person name="Nakajima D."/>
            <person name="Okazaki N."/>
            <person name="Yamakawa H."/>
            <person name="Kikuno R."/>
            <person name="Ohara O."/>
            <person name="Nagase T."/>
        </authorList>
    </citation>
    <scope>SEQUENCE REVISION</scope>
</reference>
<reference key="3">
    <citation type="journal article" date="2007" name="BMC Genomics">
        <title>The full-ORF clone resource of the German cDNA consortium.</title>
        <authorList>
            <person name="Bechtel S."/>
            <person name="Rosenfelder H."/>
            <person name="Duda A."/>
            <person name="Schmidt C.P."/>
            <person name="Ernst U."/>
            <person name="Wellenreuther R."/>
            <person name="Mehrle A."/>
            <person name="Schuster C."/>
            <person name="Bahr A."/>
            <person name="Bloecker H."/>
            <person name="Heubner D."/>
            <person name="Hoerlein A."/>
            <person name="Michel G."/>
            <person name="Wedler H."/>
            <person name="Koehrer K."/>
            <person name="Ottenwaelder B."/>
            <person name="Poustka A."/>
            <person name="Wiemann S."/>
            <person name="Schupp I."/>
        </authorList>
    </citation>
    <scope>NUCLEOTIDE SEQUENCE [LARGE SCALE MRNA] (ISOFORM 2)</scope>
    <source>
        <tissue>Retina</tissue>
    </source>
</reference>
<reference key="4">
    <citation type="journal article" date="2006" name="Nature">
        <title>The DNA sequence and biological annotation of human chromosome 1.</title>
        <authorList>
            <person name="Gregory S.G."/>
            <person name="Barlow K.F."/>
            <person name="McLay K.E."/>
            <person name="Kaul R."/>
            <person name="Swarbreck D."/>
            <person name="Dunham A."/>
            <person name="Scott C.E."/>
            <person name="Howe K.L."/>
            <person name="Woodfine K."/>
            <person name="Spencer C.C.A."/>
            <person name="Jones M.C."/>
            <person name="Gillson C."/>
            <person name="Searle S."/>
            <person name="Zhou Y."/>
            <person name="Kokocinski F."/>
            <person name="McDonald L."/>
            <person name="Evans R."/>
            <person name="Phillips K."/>
            <person name="Atkinson A."/>
            <person name="Cooper R."/>
            <person name="Jones C."/>
            <person name="Hall R.E."/>
            <person name="Andrews T.D."/>
            <person name="Lloyd C."/>
            <person name="Ainscough R."/>
            <person name="Almeida J.P."/>
            <person name="Ambrose K.D."/>
            <person name="Anderson F."/>
            <person name="Andrew R.W."/>
            <person name="Ashwell R.I.S."/>
            <person name="Aubin K."/>
            <person name="Babbage A.K."/>
            <person name="Bagguley C.L."/>
            <person name="Bailey J."/>
            <person name="Beasley H."/>
            <person name="Bethel G."/>
            <person name="Bird C.P."/>
            <person name="Bray-Allen S."/>
            <person name="Brown J.Y."/>
            <person name="Brown A.J."/>
            <person name="Buckley D."/>
            <person name="Burton J."/>
            <person name="Bye J."/>
            <person name="Carder C."/>
            <person name="Chapman J.C."/>
            <person name="Clark S.Y."/>
            <person name="Clarke G."/>
            <person name="Clee C."/>
            <person name="Cobley V."/>
            <person name="Collier R.E."/>
            <person name="Corby N."/>
            <person name="Coville G.J."/>
            <person name="Davies J."/>
            <person name="Deadman R."/>
            <person name="Dunn M."/>
            <person name="Earthrowl M."/>
            <person name="Ellington A.G."/>
            <person name="Errington H."/>
            <person name="Frankish A."/>
            <person name="Frankland J."/>
            <person name="French L."/>
            <person name="Garner P."/>
            <person name="Garnett J."/>
            <person name="Gay L."/>
            <person name="Ghori M.R.J."/>
            <person name="Gibson R."/>
            <person name="Gilby L.M."/>
            <person name="Gillett W."/>
            <person name="Glithero R.J."/>
            <person name="Grafham D.V."/>
            <person name="Griffiths C."/>
            <person name="Griffiths-Jones S."/>
            <person name="Grocock R."/>
            <person name="Hammond S."/>
            <person name="Harrison E.S.I."/>
            <person name="Hart E."/>
            <person name="Haugen E."/>
            <person name="Heath P.D."/>
            <person name="Holmes S."/>
            <person name="Holt K."/>
            <person name="Howden P.J."/>
            <person name="Hunt A.R."/>
            <person name="Hunt S.E."/>
            <person name="Hunter G."/>
            <person name="Isherwood J."/>
            <person name="James R."/>
            <person name="Johnson C."/>
            <person name="Johnson D."/>
            <person name="Joy A."/>
            <person name="Kay M."/>
            <person name="Kershaw J.K."/>
            <person name="Kibukawa M."/>
            <person name="Kimberley A.M."/>
            <person name="King A."/>
            <person name="Knights A.J."/>
            <person name="Lad H."/>
            <person name="Laird G."/>
            <person name="Lawlor S."/>
            <person name="Leongamornlert D.A."/>
            <person name="Lloyd D.M."/>
            <person name="Loveland J."/>
            <person name="Lovell J."/>
            <person name="Lush M.J."/>
            <person name="Lyne R."/>
            <person name="Martin S."/>
            <person name="Mashreghi-Mohammadi M."/>
            <person name="Matthews L."/>
            <person name="Matthews N.S.W."/>
            <person name="McLaren S."/>
            <person name="Milne S."/>
            <person name="Mistry S."/>
            <person name="Moore M.J.F."/>
            <person name="Nickerson T."/>
            <person name="O'Dell C.N."/>
            <person name="Oliver K."/>
            <person name="Palmeiri A."/>
            <person name="Palmer S.A."/>
            <person name="Parker A."/>
            <person name="Patel D."/>
            <person name="Pearce A.V."/>
            <person name="Peck A.I."/>
            <person name="Pelan S."/>
            <person name="Phelps K."/>
            <person name="Phillimore B.J."/>
            <person name="Plumb R."/>
            <person name="Rajan J."/>
            <person name="Raymond C."/>
            <person name="Rouse G."/>
            <person name="Saenphimmachak C."/>
            <person name="Sehra H.K."/>
            <person name="Sheridan E."/>
            <person name="Shownkeen R."/>
            <person name="Sims S."/>
            <person name="Skuce C.D."/>
            <person name="Smith M."/>
            <person name="Steward C."/>
            <person name="Subramanian S."/>
            <person name="Sycamore N."/>
            <person name="Tracey A."/>
            <person name="Tromans A."/>
            <person name="Van Helmond Z."/>
            <person name="Wall M."/>
            <person name="Wallis J.M."/>
            <person name="White S."/>
            <person name="Whitehead S.L."/>
            <person name="Wilkinson J.E."/>
            <person name="Willey D.L."/>
            <person name="Williams H."/>
            <person name="Wilming L."/>
            <person name="Wray P.W."/>
            <person name="Wu Z."/>
            <person name="Coulson A."/>
            <person name="Vaudin M."/>
            <person name="Sulston J.E."/>
            <person name="Durbin R.M."/>
            <person name="Hubbard T."/>
            <person name="Wooster R."/>
            <person name="Dunham I."/>
            <person name="Carter N.P."/>
            <person name="McVean G."/>
            <person name="Ross M.T."/>
            <person name="Harrow J."/>
            <person name="Olson M.V."/>
            <person name="Beck S."/>
            <person name="Rogers J."/>
            <person name="Bentley D.R."/>
        </authorList>
    </citation>
    <scope>NUCLEOTIDE SEQUENCE [LARGE SCALE GENOMIC DNA]</scope>
</reference>
<reference key="5">
    <citation type="journal article" date="2004" name="Genome Res.">
        <title>The status, quality, and expansion of the NIH full-length cDNA project: the Mammalian Gene Collection (MGC).</title>
        <authorList>
            <consortium name="The MGC Project Team"/>
        </authorList>
    </citation>
    <scope>NUCLEOTIDE SEQUENCE [LARGE SCALE MRNA] (ISOFORM 1)</scope>
    <source>
        <tissue>Skin</tissue>
        <tissue>Testis</tissue>
    </source>
</reference>
<reference key="6">
    <citation type="journal article" date="2020" name="J. Cell Biol.">
        <title>ERdj8 governs the size of autophagosomes during the formation process.</title>
        <authorList>
            <person name="Yamamoto Y.H."/>
            <person name="Kasai A."/>
            <person name="Omori H."/>
            <person name="Takino T."/>
            <person name="Sugihara M."/>
            <person name="Umemoto T."/>
            <person name="Hamasaki M."/>
            <person name="Hatta T."/>
            <person name="Natsume T."/>
            <person name="Morimoto R.I."/>
            <person name="Arai R."/>
            <person name="Waguri S."/>
            <person name="Sato M."/>
            <person name="Sato K."/>
            <person name="Bar-Nun S."/>
            <person name="Yoshimori T."/>
            <person name="Noda T."/>
            <person name="Nagata K."/>
        </authorList>
    </citation>
    <scope>FUNCTION</scope>
    <scope>SUBCELLULAR LOCATION</scope>
    <scope>MUTAGENESIS OF HIS-57; CYS-171 AND CYS-174</scope>
</reference>
<gene>
    <name type="primary">DNAJC16</name>
    <name type="synonym">ERDJ8</name>
    <name type="synonym">KIAA0962</name>
</gene>
<sequence length="782" mass="90591">MEVRKLSISWQFLIVLVLILQILSALDFDPYRVLGVSRTASQADIKKAYKKLAREWHPDKNKDPGAEDKFIQISKAYEILSNEEKRSNYDQYGDAGENQGYQKQQQQREYRFRHFHENFYFDESFFHFPFNSERRDSIDEKYLLHFSHYVNEVVPDSFKKPYLIKITSDWCFSCIHIEPVWKEVIQELEELGVGIGVVHAGYERRLAHHLGAHSTPSILGIINGKISFFHNAVVRENLRQFVESLLPGNLVEKVTNKNYVRFLSGWQQENKPHVLLFDQTPIVPLLYKLTAFAYKDYLSFGYVYVGLRGTEEMTRRYNINIYAPTLLVFKEHINRPADVIQARGMKKQIIDDFITRNKYLLAARLTSQKLFHELCPVKRSHRQRKYCVVLLTAETTKLSKPFEAFLSFALANTQDTVRFVHVYSNRQQEFADTLLPDSEAFQGKSAVSILERRNTAGRVVYKTLEDPWIGSESDKFILLGYLDQLRKDPALLSSEAVLPDLTDELAPVFLLRWFYSASDYISDCWDSIFHNNWREMMPLLSLIFSALFILFGTVIVQAFSDSNDERESSPPEKEEAQEKTGKTEPSFTKENSSKIPKKGFVEVTELTDVTYTSNLVRLRPGHMNVVLILSNSTKTSLLQKFALEVYTFTGSSCLHFSFLSLDKHREWLEYLLEFAQDAAPIPNQYDKHFMERDYTGYVLALNGHKKYFCLFKPQKTVEEEEAIGSCSDVDSSLYLGESRGKPSCGLGSRPIKGKLSKLSLWMERLLEGSLQRFYIPSWPELD</sequence>
<name>DJC16_HUMAN</name>
<protein>
    <recommendedName>
        <fullName>DnaJ homolog subfamily C member 16</fullName>
    </recommendedName>
    <alternativeName>
        <fullName evidence="7">Endoplasmic reticulum DNA J domain-containing protein 8</fullName>
        <shortName>ER-resident protein ERdj8</shortName>
        <shortName>ERdj8</shortName>
    </alternativeName>
</protein>
<keyword id="KW-0025">Alternative splicing</keyword>
<keyword id="KW-0072">Autophagy</keyword>
<keyword id="KW-0256">Endoplasmic reticulum</keyword>
<keyword id="KW-0325">Glycoprotein</keyword>
<keyword id="KW-0472">Membrane</keyword>
<keyword id="KW-1267">Proteomics identification</keyword>
<keyword id="KW-1185">Reference proteome</keyword>
<keyword id="KW-0732">Signal</keyword>
<keyword id="KW-0812">Transmembrane</keyword>
<keyword id="KW-1133">Transmembrane helix</keyword>